<feature type="chain" id="PRO_1000133280" description="Isocitrate dehydrogenase kinase/phosphatase">
    <location>
        <begin position="1"/>
        <end position="583"/>
    </location>
</feature>
<feature type="active site" evidence="1">
    <location>
        <position position="371"/>
    </location>
</feature>
<feature type="binding site" evidence="1">
    <location>
        <begin position="315"/>
        <end position="321"/>
    </location>
    <ligand>
        <name>ATP</name>
        <dbReference type="ChEBI" id="CHEBI:30616"/>
    </ligand>
</feature>
<feature type="binding site" evidence="1">
    <location>
        <position position="336"/>
    </location>
    <ligand>
        <name>ATP</name>
        <dbReference type="ChEBI" id="CHEBI:30616"/>
    </ligand>
</feature>
<dbReference type="EC" id="2.7.11.5" evidence="1"/>
<dbReference type="EC" id="3.1.3.-" evidence="1"/>
<dbReference type="EMBL" id="AM933173">
    <property type="protein sequence ID" value="CAR39815.1"/>
    <property type="molecule type" value="Genomic_DNA"/>
</dbReference>
<dbReference type="RefSeq" id="WP_001137262.1">
    <property type="nucleotide sequence ID" value="NC_011274.1"/>
</dbReference>
<dbReference type="SMR" id="B5R7Q4"/>
<dbReference type="KEGG" id="seg:SG4045"/>
<dbReference type="HOGENOM" id="CLU_033804_1_1_6"/>
<dbReference type="Proteomes" id="UP000008321">
    <property type="component" value="Chromosome"/>
</dbReference>
<dbReference type="GO" id="GO:0005737">
    <property type="term" value="C:cytoplasm"/>
    <property type="evidence" value="ECO:0007669"/>
    <property type="project" value="UniProtKB-SubCell"/>
</dbReference>
<dbReference type="GO" id="GO:0008772">
    <property type="term" value="F:[isocitrate dehydrogenase (NADP+)] kinase activity"/>
    <property type="evidence" value="ECO:0007669"/>
    <property type="project" value="UniProtKB-UniRule"/>
</dbReference>
<dbReference type="GO" id="GO:0016208">
    <property type="term" value="F:AMP binding"/>
    <property type="evidence" value="ECO:0007669"/>
    <property type="project" value="TreeGrafter"/>
</dbReference>
<dbReference type="GO" id="GO:0005524">
    <property type="term" value="F:ATP binding"/>
    <property type="evidence" value="ECO:0007669"/>
    <property type="project" value="UniProtKB-UniRule"/>
</dbReference>
<dbReference type="GO" id="GO:0004721">
    <property type="term" value="F:phosphoprotein phosphatase activity"/>
    <property type="evidence" value="ECO:0007669"/>
    <property type="project" value="UniProtKB-KW"/>
</dbReference>
<dbReference type="GO" id="GO:0004674">
    <property type="term" value="F:protein serine/threonine kinase activity"/>
    <property type="evidence" value="ECO:0007669"/>
    <property type="project" value="UniProtKB-KW"/>
</dbReference>
<dbReference type="GO" id="GO:0006006">
    <property type="term" value="P:glucose metabolic process"/>
    <property type="evidence" value="ECO:0007669"/>
    <property type="project" value="InterPro"/>
</dbReference>
<dbReference type="GO" id="GO:0006097">
    <property type="term" value="P:glyoxylate cycle"/>
    <property type="evidence" value="ECO:0007669"/>
    <property type="project" value="UniProtKB-UniRule"/>
</dbReference>
<dbReference type="GO" id="GO:0006099">
    <property type="term" value="P:tricarboxylic acid cycle"/>
    <property type="evidence" value="ECO:0007669"/>
    <property type="project" value="UniProtKB-UniRule"/>
</dbReference>
<dbReference type="HAMAP" id="MF_00747">
    <property type="entry name" value="AceK"/>
    <property type="match status" value="1"/>
</dbReference>
<dbReference type="InterPro" id="IPR046855">
    <property type="entry name" value="AceK_kinase"/>
</dbReference>
<dbReference type="InterPro" id="IPR046854">
    <property type="entry name" value="AceK_regulatory"/>
</dbReference>
<dbReference type="InterPro" id="IPR010452">
    <property type="entry name" value="Isocitrate_DH_AceK"/>
</dbReference>
<dbReference type="NCBIfam" id="NF002804">
    <property type="entry name" value="PRK02946.1"/>
    <property type="match status" value="1"/>
</dbReference>
<dbReference type="PANTHER" id="PTHR39559">
    <property type="match status" value="1"/>
</dbReference>
<dbReference type="PANTHER" id="PTHR39559:SF1">
    <property type="entry name" value="ISOCITRATE DEHYDROGENASE KINASE_PHOSPHATASE"/>
    <property type="match status" value="1"/>
</dbReference>
<dbReference type="Pfam" id="PF06315">
    <property type="entry name" value="AceK_kinase"/>
    <property type="match status" value="1"/>
</dbReference>
<dbReference type="Pfam" id="PF20423">
    <property type="entry name" value="AceK_regulatory"/>
    <property type="match status" value="1"/>
</dbReference>
<dbReference type="PIRSF" id="PIRSF000719">
    <property type="entry name" value="AceK"/>
    <property type="match status" value="1"/>
</dbReference>
<reference key="1">
    <citation type="journal article" date="2008" name="Genome Res.">
        <title>Comparative genome analysis of Salmonella enteritidis PT4 and Salmonella gallinarum 287/91 provides insights into evolutionary and host adaptation pathways.</title>
        <authorList>
            <person name="Thomson N.R."/>
            <person name="Clayton D.J."/>
            <person name="Windhorst D."/>
            <person name="Vernikos G."/>
            <person name="Davidson S."/>
            <person name="Churcher C."/>
            <person name="Quail M.A."/>
            <person name="Stevens M."/>
            <person name="Jones M.A."/>
            <person name="Watson M."/>
            <person name="Barron A."/>
            <person name="Layton A."/>
            <person name="Pickard D."/>
            <person name="Kingsley R.A."/>
            <person name="Bignell A."/>
            <person name="Clark L."/>
            <person name="Harris B."/>
            <person name="Ormond D."/>
            <person name="Abdellah Z."/>
            <person name="Brooks K."/>
            <person name="Cherevach I."/>
            <person name="Chillingworth T."/>
            <person name="Woodward J."/>
            <person name="Norberczak H."/>
            <person name="Lord A."/>
            <person name="Arrowsmith C."/>
            <person name="Jagels K."/>
            <person name="Moule S."/>
            <person name="Mungall K."/>
            <person name="Saunders M."/>
            <person name="Whitehead S."/>
            <person name="Chabalgoity J.A."/>
            <person name="Maskell D."/>
            <person name="Humphreys T."/>
            <person name="Roberts M."/>
            <person name="Barrow P.A."/>
            <person name="Dougan G."/>
            <person name="Parkhill J."/>
        </authorList>
    </citation>
    <scope>NUCLEOTIDE SEQUENCE [LARGE SCALE GENOMIC DNA]</scope>
    <source>
        <strain>287/91 / NCTC 13346</strain>
    </source>
</reference>
<keyword id="KW-0067">ATP-binding</keyword>
<keyword id="KW-0963">Cytoplasm</keyword>
<keyword id="KW-0329">Glyoxylate bypass</keyword>
<keyword id="KW-0378">Hydrolase</keyword>
<keyword id="KW-0418">Kinase</keyword>
<keyword id="KW-0547">Nucleotide-binding</keyword>
<keyword id="KW-0904">Protein phosphatase</keyword>
<keyword id="KW-0723">Serine/threonine-protein kinase</keyword>
<keyword id="KW-0808">Transferase</keyword>
<keyword id="KW-0816">Tricarboxylic acid cycle</keyword>
<sequence length="583" mass="68000">MPRGLELLIAQTILQGFDAQYGRFLEVTSGAQQRFEQADWHAVQQAMKSRIHLYDHHVGLVVEQLRCITDGKSTDADFLLRVKEHYTRLLPDYPRFEIAESFFNSVYCRLFDHRSLTPERLFIFSSQPERRFRTIPRPLAKDFFPDHGWEPLLMRILSDLPLRLPWQNKSRDIRYIIAHLTETLGEDALPRCHVQVANELFYRNKAAWLVGKLTTPDGTLPFLLPIHRTDEGELFVDTCLTTTAEASIVFGFARSYFMVYAPLLAALVEWLREILPGKTTAELYMAIGCQKHAKTESYREYLCYLAESDEKFIEAPGIRGMVMLVFTLPGFDRVFKIIKDKFAPQKEMSAAHVRACYQLVKEHDRVGRMADTQEFENFVLDKRQIDPALMALLRQEVPEKITDLGEHIVIRHLYIERRMVPLNIWLEQVEGQQLRDAIEEYGNAIRQLAAANIFPGDMLFKNFGVTRHGRVVFYDYDEICYMTEVNFRDIPPARYPEDELASEPWYSVSPGDVFPEEFRHWLCADPRIGPLFEEMHADLFRADYWRALQTRIKEGHVEDVYAYRRRQRFSVRYGAISSTANSS</sequence>
<organism>
    <name type="scientific">Salmonella gallinarum (strain 287/91 / NCTC 13346)</name>
    <dbReference type="NCBI Taxonomy" id="550538"/>
    <lineage>
        <taxon>Bacteria</taxon>
        <taxon>Pseudomonadati</taxon>
        <taxon>Pseudomonadota</taxon>
        <taxon>Gammaproteobacteria</taxon>
        <taxon>Enterobacterales</taxon>
        <taxon>Enterobacteriaceae</taxon>
        <taxon>Salmonella</taxon>
    </lineage>
</organism>
<accession>B5R7Q4</accession>
<comment type="function">
    <text evidence="1">Bifunctional enzyme which can phosphorylate or dephosphorylate isocitrate dehydrogenase (IDH) on a specific serine residue. This is a regulatory mechanism which enables bacteria to bypass the Krebs cycle via the glyoxylate shunt in response to the source of carbon. When bacteria are grown on glucose, IDH is fully active and unphosphorylated, but when grown on acetate or ethanol, the activity of IDH declines drastically concomitant with its phosphorylation.</text>
</comment>
<comment type="catalytic activity">
    <reaction evidence="1">
        <text>L-seryl-[isocitrate dehydrogenase] + ATP = O-phospho-L-seryl-[isocitrate dehydrogenase] + ADP + H(+)</text>
        <dbReference type="Rhea" id="RHEA:43540"/>
        <dbReference type="Rhea" id="RHEA-COMP:10605"/>
        <dbReference type="Rhea" id="RHEA-COMP:10606"/>
        <dbReference type="ChEBI" id="CHEBI:15378"/>
        <dbReference type="ChEBI" id="CHEBI:29999"/>
        <dbReference type="ChEBI" id="CHEBI:30616"/>
        <dbReference type="ChEBI" id="CHEBI:83421"/>
        <dbReference type="ChEBI" id="CHEBI:456216"/>
        <dbReference type="EC" id="2.7.11.5"/>
    </reaction>
</comment>
<comment type="subcellular location">
    <subcellularLocation>
        <location evidence="1">Cytoplasm</location>
    </subcellularLocation>
</comment>
<comment type="similarity">
    <text evidence="1">Belongs to the AceK family.</text>
</comment>
<proteinExistence type="inferred from homology"/>
<gene>
    <name evidence="1" type="primary">aceK</name>
    <name type="ordered locus">SG4045</name>
</gene>
<protein>
    <recommendedName>
        <fullName evidence="1">Isocitrate dehydrogenase kinase/phosphatase</fullName>
        <shortName evidence="1">IDH kinase/phosphatase</shortName>
        <shortName evidence="1">IDHK/P</shortName>
        <ecNumber evidence="1">2.7.11.5</ecNumber>
        <ecNumber evidence="1">3.1.3.-</ecNumber>
    </recommendedName>
</protein>
<evidence type="ECO:0000255" key="1">
    <source>
        <dbReference type="HAMAP-Rule" id="MF_00747"/>
    </source>
</evidence>
<name>ACEK_SALG2</name>